<keyword id="KW-0175">Coiled coil</keyword>
<keyword id="KW-0574">Periplasm</keyword>
<keyword id="KW-0732">Signal</keyword>
<feature type="signal peptide" evidence="1">
    <location>
        <begin position="1"/>
        <end position="19"/>
    </location>
</feature>
<feature type="chain" id="PRO_1000140662" description="UPF0194 membrane protein YbhG">
    <location>
        <begin position="20"/>
        <end position="331"/>
    </location>
</feature>
<feature type="coiled-coil region" evidence="1">
    <location>
        <begin position="107"/>
        <end position="208"/>
    </location>
</feature>
<name>YBHG_SALSV</name>
<accession>B4TQW1</accession>
<comment type="subcellular location">
    <subcellularLocation>
        <location evidence="1">Periplasm</location>
    </subcellularLocation>
</comment>
<comment type="similarity">
    <text evidence="1">Belongs to the UPF0194 family.</text>
</comment>
<sequence>MKKPVVIGLAIAAIVAVIAGGTWWYQSRQDDGLTLYGNVDIRTVNISFRVGGRLASLNVDEGDAIKAGQVLGELDHAPYENALMQAKAGVSVAQAQYDLMLAGYRDEEIAQAAAAVRQAQAAYDYAQNFYNRQQGLWKSRTISANDLENARSSRDQAQATLKSAQDKLSQYRTGNREQDIAQAKASLEQAKAQLAQAQLDLQDTTLIAPANGTLLTRAVEPGSMLNAGSTVLTLSLTRPVWVRAYVDERNLSQTQPGRDILLYTDGRPDKPYHGKIGFVSPTAEFTPKTVETPDLRTDLVYRLRIIVTDADDALRQGMPVTVKFNDEARHE</sequence>
<reference key="1">
    <citation type="journal article" date="2011" name="J. Bacteriol.">
        <title>Comparative genomics of 28 Salmonella enterica isolates: evidence for CRISPR-mediated adaptive sublineage evolution.</title>
        <authorList>
            <person name="Fricke W.F."/>
            <person name="Mammel M.K."/>
            <person name="McDermott P.F."/>
            <person name="Tartera C."/>
            <person name="White D.G."/>
            <person name="Leclerc J.E."/>
            <person name="Ravel J."/>
            <person name="Cebula T.A."/>
        </authorList>
    </citation>
    <scope>NUCLEOTIDE SEQUENCE [LARGE SCALE GENOMIC DNA]</scope>
    <source>
        <strain>CVM19633</strain>
    </source>
</reference>
<gene>
    <name evidence="1" type="primary">ybhG</name>
    <name type="ordered locus">SeSA_A0966</name>
</gene>
<evidence type="ECO:0000255" key="1">
    <source>
        <dbReference type="HAMAP-Rule" id="MF_01304"/>
    </source>
</evidence>
<protein>
    <recommendedName>
        <fullName evidence="1">UPF0194 membrane protein YbhG</fullName>
    </recommendedName>
</protein>
<dbReference type="EMBL" id="CP001127">
    <property type="protein sequence ID" value="ACF91337.1"/>
    <property type="molecule type" value="Genomic_DNA"/>
</dbReference>
<dbReference type="SMR" id="B4TQW1"/>
<dbReference type="KEGG" id="sew:SeSA_A0966"/>
<dbReference type="HOGENOM" id="CLU_018816_6_3_6"/>
<dbReference type="Proteomes" id="UP000001865">
    <property type="component" value="Chromosome"/>
</dbReference>
<dbReference type="GO" id="GO:0042597">
    <property type="term" value="C:periplasmic space"/>
    <property type="evidence" value="ECO:0007669"/>
    <property type="project" value="UniProtKB-SubCell"/>
</dbReference>
<dbReference type="FunFam" id="1.10.287.470:FF:000004">
    <property type="entry name" value="UPF0194 membrane protein YbhG"/>
    <property type="match status" value="1"/>
</dbReference>
<dbReference type="FunFam" id="2.40.50.100:FF:000025">
    <property type="entry name" value="UPF0194 membrane protein YbhG"/>
    <property type="match status" value="1"/>
</dbReference>
<dbReference type="Gene3D" id="2.40.30.170">
    <property type="match status" value="1"/>
</dbReference>
<dbReference type="Gene3D" id="2.40.50.100">
    <property type="match status" value="2"/>
</dbReference>
<dbReference type="Gene3D" id="1.10.287.470">
    <property type="entry name" value="Helix hairpin bin"/>
    <property type="match status" value="2"/>
</dbReference>
<dbReference type="HAMAP" id="MF_01304">
    <property type="entry name" value="UPF0194"/>
    <property type="match status" value="1"/>
</dbReference>
<dbReference type="InterPro" id="IPR032317">
    <property type="entry name" value="CusB_D23"/>
</dbReference>
<dbReference type="InterPro" id="IPR022936">
    <property type="entry name" value="UPF0194_membrane_YbhG"/>
</dbReference>
<dbReference type="InterPro" id="IPR050465">
    <property type="entry name" value="UPF0194_transport"/>
</dbReference>
<dbReference type="NCBIfam" id="NF002939">
    <property type="entry name" value="PRK03598.1"/>
    <property type="match status" value="1"/>
</dbReference>
<dbReference type="PANTHER" id="PTHR32347">
    <property type="entry name" value="EFFLUX SYSTEM COMPONENT YKNX-RELATED"/>
    <property type="match status" value="1"/>
</dbReference>
<dbReference type="PANTHER" id="PTHR32347:SF29">
    <property type="entry name" value="UPF0194 MEMBRANE PROTEIN YBHG"/>
    <property type="match status" value="1"/>
</dbReference>
<dbReference type="Pfam" id="PF16576">
    <property type="entry name" value="HlyD_D23"/>
    <property type="match status" value="1"/>
</dbReference>
<dbReference type="SUPFAM" id="SSF111369">
    <property type="entry name" value="HlyD-like secretion proteins"/>
    <property type="match status" value="3"/>
</dbReference>
<proteinExistence type="inferred from homology"/>
<organism>
    <name type="scientific">Salmonella schwarzengrund (strain CVM19633)</name>
    <dbReference type="NCBI Taxonomy" id="439843"/>
    <lineage>
        <taxon>Bacteria</taxon>
        <taxon>Pseudomonadati</taxon>
        <taxon>Pseudomonadota</taxon>
        <taxon>Gammaproteobacteria</taxon>
        <taxon>Enterobacterales</taxon>
        <taxon>Enterobacteriaceae</taxon>
        <taxon>Salmonella</taxon>
    </lineage>
</organism>